<accession>P17752</accession>
<accession>D3DQX6</accession>
<accession>O95188</accession>
<accession>O95189</accession>
<accession>Q16736</accession>
<accession>Q3KPG8</accession>
<organism>
    <name type="scientific">Homo sapiens</name>
    <name type="common">Human</name>
    <dbReference type="NCBI Taxonomy" id="9606"/>
    <lineage>
        <taxon>Eukaryota</taxon>
        <taxon>Metazoa</taxon>
        <taxon>Chordata</taxon>
        <taxon>Craniata</taxon>
        <taxon>Vertebrata</taxon>
        <taxon>Euteleostomi</taxon>
        <taxon>Mammalia</taxon>
        <taxon>Eutheria</taxon>
        <taxon>Euarchontoglires</taxon>
        <taxon>Primates</taxon>
        <taxon>Haplorrhini</taxon>
        <taxon>Catarrhini</taxon>
        <taxon>Hominidae</taxon>
        <taxon>Homo</taxon>
    </lineage>
</organism>
<keyword id="KW-0002">3D-structure</keyword>
<keyword id="KW-0025">Alternative splicing</keyword>
<keyword id="KW-0408">Iron</keyword>
<keyword id="KW-0479">Metal-binding</keyword>
<keyword id="KW-0503">Monooxygenase</keyword>
<keyword id="KW-0560">Oxidoreductase</keyword>
<keyword id="KW-0597">Phosphoprotein</keyword>
<keyword id="KW-1267">Proteomics identification</keyword>
<keyword id="KW-1185">Reference proteome</keyword>
<keyword id="KW-0724">Serotonin biosynthesis</keyword>
<keyword id="KW-0832">Ubl conjugation</keyword>
<proteinExistence type="evidence at protein level"/>
<sequence length="444" mass="50985">MIEDNKENKDHSLERGRASLIFSLKNEVGGLIKALKIFQEKHVNLLHIESRKSKRRNSEFEIFVDCDINREQLNDIFHLLKSHTNVLSVNLPDNFTLKEDGMETVPWFPKKISDLDHCANRVLMYGSELDADHPGFKDNVYRKRRKYFADLAMNYKHGDPIPKVEFTEEEIKTWGTVFQELNKLYPTHACREYLKNLPLLSKYCGYREDNIPQLEDVSNFLKERTGFSIRPVAGYLSPRDFLSGLAFRVFHCTQYVRHSSDPFYTPEPDTCHELLGHVPLLAEPSFAQFSQEIGLASLGASEEAVQKLATCYFFTVEFGLCKQDGQLRVFGAGLLSSISELKHALSGHAKVKPFDPKITCKQECLITTFQDVYFVSESFEDAKEKMREFTKTIKRPFGVKYNPYTRSIQILKDTKSITSAMNELQHDLDVVSDALAKVSRKPSI</sequence>
<dbReference type="EC" id="1.14.16.4" evidence="2"/>
<dbReference type="EMBL" id="X52836">
    <property type="protein sequence ID" value="CAA37018.1"/>
    <property type="molecule type" value="mRNA"/>
</dbReference>
<dbReference type="EMBL" id="L29306">
    <property type="protein sequence ID" value="AAA67050.1"/>
    <property type="molecule type" value="mRNA"/>
</dbReference>
<dbReference type="EMBL" id="CH471064">
    <property type="protein sequence ID" value="EAW68421.1"/>
    <property type="molecule type" value="Genomic_DNA"/>
</dbReference>
<dbReference type="EMBL" id="CH471064">
    <property type="protein sequence ID" value="EAW68422.1"/>
    <property type="molecule type" value="Genomic_DNA"/>
</dbReference>
<dbReference type="EMBL" id="BC106739">
    <property type="protein sequence ID" value="AAI06740.1"/>
    <property type="molecule type" value="mRNA"/>
</dbReference>
<dbReference type="EMBL" id="AF057280">
    <property type="protein sequence ID" value="AAC69458.1"/>
    <property type="molecule type" value="Genomic_DNA"/>
</dbReference>
<dbReference type="EMBL" id="AF057280">
    <property type="protein sequence ID" value="AAC69459.1"/>
    <property type="molecule type" value="Genomic_DNA"/>
</dbReference>
<dbReference type="CCDS" id="CCDS7829.1">
    <molecule id="P17752-1"/>
</dbReference>
<dbReference type="PIR" id="S10489">
    <property type="entry name" value="S10489"/>
</dbReference>
<dbReference type="RefSeq" id="NP_004170.1">
    <molecule id="P17752-1"/>
    <property type="nucleotide sequence ID" value="NM_004179.3"/>
</dbReference>
<dbReference type="PDB" id="1MLW">
    <property type="method" value="X-ray"/>
    <property type="resolution" value="1.71 A"/>
    <property type="chains" value="A=102-402"/>
</dbReference>
<dbReference type="PDB" id="3HF6">
    <property type="method" value="X-ray"/>
    <property type="resolution" value="1.80 A"/>
    <property type="chains" value="A=105-393"/>
</dbReference>
<dbReference type="PDB" id="3HF8">
    <property type="method" value="X-ray"/>
    <property type="resolution" value="1.85 A"/>
    <property type="chains" value="A=105-393"/>
</dbReference>
<dbReference type="PDB" id="3HFB">
    <property type="method" value="X-ray"/>
    <property type="resolution" value="1.92 A"/>
    <property type="chains" value="A=104-393"/>
</dbReference>
<dbReference type="PDB" id="5J6D">
    <property type="method" value="X-ray"/>
    <property type="resolution" value="1.90 A"/>
    <property type="chains" value="A/B=102-402"/>
</dbReference>
<dbReference type="PDB" id="5L01">
    <property type="method" value="X-ray"/>
    <property type="resolution" value="1.90 A"/>
    <property type="chains" value="A=1-444"/>
</dbReference>
<dbReference type="PDB" id="5TPG">
    <property type="method" value="X-ray"/>
    <property type="resolution" value="1.50 A"/>
    <property type="chains" value="A=104-402"/>
</dbReference>
<dbReference type="PDB" id="7ZIF">
    <property type="method" value="X-ray"/>
    <property type="resolution" value="1.87 A"/>
    <property type="chains" value="A=105-401"/>
</dbReference>
<dbReference type="PDB" id="7ZIG">
    <property type="method" value="X-ray"/>
    <property type="resolution" value="1.81 A"/>
    <property type="chains" value="A=105-401"/>
</dbReference>
<dbReference type="PDB" id="7ZIH">
    <property type="method" value="X-ray"/>
    <property type="resolution" value="1.47 A"/>
    <property type="chains" value="A=105-401"/>
</dbReference>
<dbReference type="PDB" id="7ZII">
    <property type="method" value="X-ray"/>
    <property type="resolution" value="1.63 A"/>
    <property type="chains" value="A=105-401"/>
</dbReference>
<dbReference type="PDB" id="7ZIJ">
    <property type="method" value="X-ray"/>
    <property type="resolution" value="1.95 A"/>
    <property type="chains" value="A=105-401"/>
</dbReference>
<dbReference type="PDB" id="7ZIK">
    <property type="method" value="X-ray"/>
    <property type="resolution" value="2.59 A"/>
    <property type="chains" value="A/B=105-401"/>
</dbReference>
<dbReference type="PDB" id="8CJI">
    <property type="method" value="X-ray"/>
    <property type="resolution" value="1.65 A"/>
    <property type="chains" value="A=105-401"/>
</dbReference>
<dbReference type="PDB" id="8CJJ">
    <property type="method" value="X-ray"/>
    <property type="resolution" value="1.66 A"/>
    <property type="chains" value="A=105-401"/>
</dbReference>
<dbReference type="PDB" id="8CJK">
    <property type="method" value="X-ray"/>
    <property type="resolution" value="1.46 A"/>
    <property type="chains" value="A=105-401"/>
</dbReference>
<dbReference type="PDB" id="8CJL">
    <property type="method" value="X-ray"/>
    <property type="resolution" value="1.83 A"/>
    <property type="chains" value="A=105-401"/>
</dbReference>
<dbReference type="PDB" id="8CJM">
    <property type="method" value="X-ray"/>
    <property type="resolution" value="1.90 A"/>
    <property type="chains" value="A=105-401"/>
</dbReference>
<dbReference type="PDB" id="8CJN">
    <property type="method" value="X-ray"/>
    <property type="resolution" value="1.68 A"/>
    <property type="chains" value="A=105-401"/>
</dbReference>
<dbReference type="PDB" id="8CJO">
    <property type="method" value="X-ray"/>
    <property type="resolution" value="1.87 A"/>
    <property type="chains" value="A=105-401"/>
</dbReference>
<dbReference type="PDBsum" id="1MLW"/>
<dbReference type="PDBsum" id="3HF6"/>
<dbReference type="PDBsum" id="3HF8"/>
<dbReference type="PDBsum" id="3HFB"/>
<dbReference type="PDBsum" id="5J6D"/>
<dbReference type="PDBsum" id="5L01"/>
<dbReference type="PDBsum" id="5TPG"/>
<dbReference type="PDBsum" id="7ZIF"/>
<dbReference type="PDBsum" id="7ZIG"/>
<dbReference type="PDBsum" id="7ZIH"/>
<dbReference type="PDBsum" id="7ZII"/>
<dbReference type="PDBsum" id="7ZIJ"/>
<dbReference type="PDBsum" id="7ZIK"/>
<dbReference type="PDBsum" id="8CJI"/>
<dbReference type="PDBsum" id="8CJJ"/>
<dbReference type="PDBsum" id="8CJK"/>
<dbReference type="PDBsum" id="8CJL"/>
<dbReference type="PDBsum" id="8CJM"/>
<dbReference type="PDBsum" id="8CJN"/>
<dbReference type="PDBsum" id="8CJO"/>
<dbReference type="SMR" id="P17752"/>
<dbReference type="BioGRID" id="113019">
    <property type="interactions" value="12"/>
</dbReference>
<dbReference type="FunCoup" id="P17752">
    <property type="interactions" value="273"/>
</dbReference>
<dbReference type="IntAct" id="P17752">
    <property type="interactions" value="13"/>
</dbReference>
<dbReference type="STRING" id="9606.ENSP00000250018"/>
<dbReference type="BindingDB" id="P17752"/>
<dbReference type="ChEMBL" id="CHEMBL5689"/>
<dbReference type="DrugBank" id="DB05199">
    <property type="generic name" value="LX1031"/>
</dbReference>
<dbReference type="DrugBank" id="DB18479">
    <property type="generic name" value="Rodatristat ethyl"/>
</dbReference>
<dbReference type="DrugBank" id="DB00360">
    <property type="generic name" value="Sapropterin"/>
</dbReference>
<dbReference type="DrugBank" id="DB12095">
    <property type="generic name" value="Telotristat ethyl"/>
</dbReference>
<dbReference type="DrugBank" id="DB00150">
    <property type="generic name" value="Tryptophan"/>
</dbReference>
<dbReference type="DrugCentral" id="P17752"/>
<dbReference type="GuidetoPHARMACOLOGY" id="1241"/>
<dbReference type="GlyGen" id="P17752">
    <property type="glycosylation" value="1 site, 1 O-linked glycan (1 site)"/>
</dbReference>
<dbReference type="iPTMnet" id="P17752"/>
<dbReference type="PhosphoSitePlus" id="P17752"/>
<dbReference type="BioMuta" id="TPH1"/>
<dbReference type="DMDM" id="116242823"/>
<dbReference type="jPOST" id="P17752"/>
<dbReference type="MassIVE" id="P17752"/>
<dbReference type="PaxDb" id="9606-ENSP00000250018"/>
<dbReference type="PeptideAtlas" id="P17752"/>
<dbReference type="ProteomicsDB" id="53513">
    <molecule id="P17752-1"/>
</dbReference>
<dbReference type="ProteomicsDB" id="53514">
    <molecule id="P17752-2"/>
</dbReference>
<dbReference type="Antibodypedia" id="4386">
    <property type="antibodies" value="622 antibodies from 42 providers"/>
</dbReference>
<dbReference type="DNASU" id="7166"/>
<dbReference type="Ensembl" id="ENST00000250018.6">
    <molecule id="P17752-1"/>
    <property type="protein sequence ID" value="ENSP00000250018.2"/>
    <property type="gene ID" value="ENSG00000129167.11"/>
</dbReference>
<dbReference type="Ensembl" id="ENST00000682019.1">
    <molecule id="P17752-1"/>
    <property type="protein sequence ID" value="ENSP00000508368.1"/>
    <property type="gene ID" value="ENSG00000129167.11"/>
</dbReference>
<dbReference type="GeneID" id="7166"/>
<dbReference type="KEGG" id="hsa:7166"/>
<dbReference type="MANE-Select" id="ENST00000682019.1">
    <property type="protein sequence ID" value="ENSP00000508368.1"/>
    <property type="RefSeq nucleotide sequence ID" value="NM_004179.3"/>
    <property type="RefSeq protein sequence ID" value="NP_004170.1"/>
</dbReference>
<dbReference type="UCSC" id="uc001mnp.3">
    <molecule id="P17752-1"/>
    <property type="organism name" value="human"/>
</dbReference>
<dbReference type="AGR" id="HGNC:12008"/>
<dbReference type="CTD" id="7166"/>
<dbReference type="DisGeNET" id="7166"/>
<dbReference type="GeneCards" id="TPH1"/>
<dbReference type="HGNC" id="HGNC:12008">
    <property type="gene designation" value="TPH1"/>
</dbReference>
<dbReference type="HPA" id="ENSG00000129167">
    <property type="expression patterns" value="Group enriched (choroid plexus, intestine, stomach)"/>
</dbReference>
<dbReference type="MIM" id="191060">
    <property type="type" value="gene"/>
</dbReference>
<dbReference type="neXtProt" id="NX_P17752"/>
<dbReference type="OpenTargets" id="ENSG00000129167"/>
<dbReference type="PharmGKB" id="PA355"/>
<dbReference type="VEuPathDB" id="HostDB:ENSG00000129167"/>
<dbReference type="eggNOG" id="KOG3820">
    <property type="taxonomic scope" value="Eukaryota"/>
</dbReference>
<dbReference type="GeneTree" id="ENSGT00950000182885"/>
<dbReference type="HOGENOM" id="CLU_023198_0_0_1"/>
<dbReference type="InParanoid" id="P17752"/>
<dbReference type="OMA" id="DMPWFPR"/>
<dbReference type="OrthoDB" id="983542at2759"/>
<dbReference type="PAN-GO" id="P17752">
    <property type="GO annotations" value="2 GO annotations based on evolutionary models"/>
</dbReference>
<dbReference type="PhylomeDB" id="P17752"/>
<dbReference type="TreeFam" id="TF313327"/>
<dbReference type="BioCyc" id="MetaCyc:HS05250-MONOMER"/>
<dbReference type="BRENDA" id="1.14.16.4">
    <property type="organism ID" value="2681"/>
</dbReference>
<dbReference type="PathwayCommons" id="P17752"/>
<dbReference type="Reactome" id="R-HSA-209931">
    <property type="pathway name" value="Serotonin and melatonin biosynthesis"/>
</dbReference>
<dbReference type="Reactome" id="R-HSA-9031628">
    <property type="pathway name" value="NGF-stimulated transcription"/>
</dbReference>
<dbReference type="SABIO-RK" id="P17752"/>
<dbReference type="SignaLink" id="P17752"/>
<dbReference type="SIGNOR" id="P17752"/>
<dbReference type="UniPathway" id="UPA00846">
    <property type="reaction ID" value="UER00799"/>
</dbReference>
<dbReference type="BioGRID-ORCS" id="7166">
    <property type="hits" value="20 hits in 1158 CRISPR screens"/>
</dbReference>
<dbReference type="ChiTaRS" id="TPH1">
    <property type="organism name" value="human"/>
</dbReference>
<dbReference type="EvolutionaryTrace" id="P17752"/>
<dbReference type="GeneWiki" id="TPH1"/>
<dbReference type="GenomeRNAi" id="7166"/>
<dbReference type="Pharos" id="P17752">
    <property type="development level" value="Tclin"/>
</dbReference>
<dbReference type="PRO" id="PR:P17752"/>
<dbReference type="Proteomes" id="UP000005640">
    <property type="component" value="Chromosome 11"/>
</dbReference>
<dbReference type="RNAct" id="P17752">
    <property type="molecule type" value="protein"/>
</dbReference>
<dbReference type="Bgee" id="ENSG00000129167">
    <property type="expression patterns" value="Expressed in buccal mucosa cell and 103 other cell types or tissues"/>
</dbReference>
<dbReference type="ExpressionAtlas" id="P17752">
    <property type="expression patterns" value="baseline and differential"/>
</dbReference>
<dbReference type="GO" id="GO:0005829">
    <property type="term" value="C:cytosol"/>
    <property type="evidence" value="ECO:0000304"/>
    <property type="project" value="Reactome"/>
</dbReference>
<dbReference type="GO" id="GO:0043005">
    <property type="term" value="C:neuron projection"/>
    <property type="evidence" value="ECO:0000318"/>
    <property type="project" value="GO_Central"/>
</dbReference>
<dbReference type="GO" id="GO:0005506">
    <property type="term" value="F:iron ion binding"/>
    <property type="evidence" value="ECO:0007669"/>
    <property type="project" value="InterPro"/>
</dbReference>
<dbReference type="GO" id="GO:0004510">
    <property type="term" value="F:tryptophan 5-monooxygenase activity"/>
    <property type="evidence" value="ECO:0000318"/>
    <property type="project" value="GO_Central"/>
</dbReference>
<dbReference type="GO" id="GO:0009072">
    <property type="term" value="P:aromatic amino acid metabolic process"/>
    <property type="evidence" value="ECO:0007669"/>
    <property type="project" value="InterPro"/>
</dbReference>
<dbReference type="GO" id="GO:0046849">
    <property type="term" value="P:bone remodeling"/>
    <property type="evidence" value="ECO:0007669"/>
    <property type="project" value="Ensembl"/>
</dbReference>
<dbReference type="GO" id="GO:0060749">
    <property type="term" value="P:mammary gland alveolus development"/>
    <property type="evidence" value="ECO:0007669"/>
    <property type="project" value="Ensembl"/>
</dbReference>
<dbReference type="GO" id="GO:0002576">
    <property type="term" value="P:platelet degranulation"/>
    <property type="evidence" value="ECO:0000250"/>
    <property type="project" value="UniProtKB"/>
</dbReference>
<dbReference type="GO" id="GO:0045600">
    <property type="term" value="P:positive regulation of fat cell differentiation"/>
    <property type="evidence" value="ECO:0007669"/>
    <property type="project" value="Ensembl"/>
</dbReference>
<dbReference type="GO" id="GO:1900046">
    <property type="term" value="P:regulation of hemostasis"/>
    <property type="evidence" value="ECO:0000250"/>
    <property type="project" value="UniProtKB"/>
</dbReference>
<dbReference type="GO" id="GO:0042427">
    <property type="term" value="P:serotonin biosynthetic process"/>
    <property type="evidence" value="ECO:0000250"/>
    <property type="project" value="UniProtKB"/>
</dbReference>
<dbReference type="CDD" id="cd04929">
    <property type="entry name" value="ACT_TPH"/>
    <property type="match status" value="1"/>
</dbReference>
<dbReference type="CDD" id="cd03346">
    <property type="entry name" value="eu_TrpOH"/>
    <property type="match status" value="1"/>
</dbReference>
<dbReference type="FunFam" id="1.10.800.10:FF:000001">
    <property type="entry name" value="tryptophan 5-hydroxylase 1"/>
    <property type="match status" value="1"/>
</dbReference>
<dbReference type="Gene3D" id="1.10.800.10">
    <property type="entry name" value="Aromatic amino acid hydroxylase"/>
    <property type="match status" value="1"/>
</dbReference>
<dbReference type="InterPro" id="IPR045865">
    <property type="entry name" value="ACT-like_dom_sf"/>
</dbReference>
<dbReference type="InterPro" id="IPR002912">
    <property type="entry name" value="ACT_dom"/>
</dbReference>
<dbReference type="InterPro" id="IPR001273">
    <property type="entry name" value="ArAA_hydroxylase"/>
</dbReference>
<dbReference type="InterPro" id="IPR018301">
    <property type="entry name" value="ArAA_hydroxylase_Fe/CU_BS"/>
</dbReference>
<dbReference type="InterPro" id="IPR036951">
    <property type="entry name" value="ArAA_hydroxylase_sf"/>
</dbReference>
<dbReference type="InterPro" id="IPR036329">
    <property type="entry name" value="Aro-AA_hydroxylase_C_sf"/>
</dbReference>
<dbReference type="InterPro" id="IPR019774">
    <property type="entry name" value="Aromatic-AA_hydroxylase_C"/>
</dbReference>
<dbReference type="InterPro" id="IPR005963">
    <property type="entry name" value="Trp_5_mOase"/>
</dbReference>
<dbReference type="InterPro" id="IPR041904">
    <property type="entry name" value="TrpOH_cat"/>
</dbReference>
<dbReference type="InterPro" id="IPR019773">
    <property type="entry name" value="Tyrosine_3-monooxygenase-like"/>
</dbReference>
<dbReference type="NCBIfam" id="TIGR01270">
    <property type="entry name" value="Trp_5_monoox"/>
    <property type="match status" value="1"/>
</dbReference>
<dbReference type="PANTHER" id="PTHR11473">
    <property type="entry name" value="AROMATIC AMINO ACID HYDROXYLASE"/>
    <property type="match status" value="1"/>
</dbReference>
<dbReference type="PANTHER" id="PTHR11473:SF23">
    <property type="entry name" value="TRYPTOPHAN 5-HYDROXYLASE 1"/>
    <property type="match status" value="1"/>
</dbReference>
<dbReference type="Pfam" id="PF00351">
    <property type="entry name" value="Biopterin_H"/>
    <property type="match status" value="1"/>
</dbReference>
<dbReference type="PIRSF" id="PIRSF000336">
    <property type="entry name" value="TH"/>
    <property type="match status" value="1"/>
</dbReference>
<dbReference type="PRINTS" id="PR00372">
    <property type="entry name" value="FYWHYDRXLASE"/>
</dbReference>
<dbReference type="SUPFAM" id="SSF55021">
    <property type="entry name" value="ACT-like"/>
    <property type="match status" value="1"/>
</dbReference>
<dbReference type="SUPFAM" id="SSF56534">
    <property type="entry name" value="Aromatic aminoacid monoxygenases, catalytic and oligomerization domains"/>
    <property type="match status" value="1"/>
</dbReference>
<dbReference type="PROSITE" id="PS51671">
    <property type="entry name" value="ACT"/>
    <property type="match status" value="1"/>
</dbReference>
<dbReference type="PROSITE" id="PS00367">
    <property type="entry name" value="BH4_AAA_HYDROXYL_1"/>
    <property type="match status" value="1"/>
</dbReference>
<dbReference type="PROSITE" id="PS51410">
    <property type="entry name" value="BH4_AAA_HYDROXYL_2"/>
    <property type="match status" value="1"/>
</dbReference>
<reference key="1">
    <citation type="journal article" date="1990" name="Nucleic Acids Res.">
        <title>Complete coding sequence of human tryptophan hydroxylase.</title>
        <authorList>
            <person name="Boulalard S."/>
            <person name="Darmon M.C."/>
            <person name="Ganem Y."/>
            <person name="Launay J.-M."/>
            <person name="Mallet J."/>
        </authorList>
    </citation>
    <scope>NUCLEOTIDE SEQUENCE [MRNA] (ISOFORM 1)</scope>
    <source>
        <tissue>Carcinoma</tissue>
    </source>
</reference>
<reference key="2">
    <citation type="journal article" date="1994" name="Arch. Biochem. Biophys.">
        <title>Cloning and expression of rabbit and human brain tryptophan hydroxylase cDNA in Escherichia coli.</title>
        <authorList>
            <person name="Tipper J.P."/>
            <person name="Citron B.A."/>
            <person name="Ribeiro P."/>
            <person name="Kaufman S."/>
        </authorList>
    </citation>
    <scope>NUCLEOTIDE SEQUENCE [MRNA] (ISOFORM 1)</scope>
    <source>
        <tissue>Brain</tissue>
    </source>
</reference>
<reference key="3">
    <citation type="submission" date="2005-09" db="EMBL/GenBank/DDBJ databases">
        <authorList>
            <person name="Mural R.J."/>
            <person name="Istrail S."/>
            <person name="Sutton G.G."/>
            <person name="Florea L."/>
            <person name="Halpern A.L."/>
            <person name="Mobarry C.M."/>
            <person name="Lippert R."/>
            <person name="Walenz B."/>
            <person name="Shatkay H."/>
            <person name="Dew I."/>
            <person name="Miller J.R."/>
            <person name="Flanigan M.J."/>
            <person name="Edwards N.J."/>
            <person name="Bolanos R."/>
            <person name="Fasulo D."/>
            <person name="Halldorsson B.V."/>
            <person name="Hannenhalli S."/>
            <person name="Turner R."/>
            <person name="Yooseph S."/>
            <person name="Lu F."/>
            <person name="Nusskern D.R."/>
            <person name="Shue B.C."/>
            <person name="Zheng X.H."/>
            <person name="Zhong F."/>
            <person name="Delcher A.L."/>
            <person name="Huson D.H."/>
            <person name="Kravitz S.A."/>
            <person name="Mouchard L."/>
            <person name="Reinert K."/>
            <person name="Remington K.A."/>
            <person name="Clark A.G."/>
            <person name="Waterman M.S."/>
            <person name="Eichler E.E."/>
            <person name="Adams M.D."/>
            <person name="Hunkapiller M.W."/>
            <person name="Myers E.W."/>
            <person name="Venter J.C."/>
        </authorList>
    </citation>
    <scope>NUCLEOTIDE SEQUENCE [LARGE SCALE GENOMIC DNA]</scope>
</reference>
<reference key="4">
    <citation type="journal article" date="2004" name="Genome Res.">
        <title>The status, quality, and expansion of the NIH full-length cDNA project: the Mammalian Gene Collection (MGC).</title>
        <authorList>
            <consortium name="The MGC Project Team"/>
        </authorList>
    </citation>
    <scope>NUCLEOTIDE SEQUENCE [LARGE SCALE MRNA] (ISOFORM 1)</scope>
</reference>
<reference key="5">
    <citation type="journal article" date="1998" name="J. Neurochem.">
        <title>Alternative splicing at the 3'-cDNA of human tryptophan hydroxylase.</title>
        <authorList>
            <person name="Wang G.A."/>
            <person name="Coon S.L."/>
            <person name="Kaufman S."/>
        </authorList>
    </citation>
    <scope>NUCLEOTIDE SEQUENCE [GENOMIC DNA] OF 388-444 (ISOFORMS 1 AND 2)</scope>
    <scope>TISSUE SPECIFICITY</scope>
</reference>
<reference key="6">
    <citation type="journal article" date="2002" name="Biochemistry">
        <title>Three-dimensional structure of human tryptophan hydroxylase and its implications for the biosynthesis of the neurotransmitters serotonin and melatonin.</title>
        <authorList>
            <person name="Wang L."/>
            <person name="Erlandsen H."/>
            <person name="Haavik J."/>
            <person name="Knappskog P.M."/>
            <person name="Stevens R.C."/>
        </authorList>
    </citation>
    <scope>X-RAY CRYSTALLOGRAPHY (1.7 ANGSTROMS) OF 102-402 IN COMPLEX WITH IRON</scope>
    <scope>COFACTOR</scope>
</reference>
<protein>
    <recommendedName>
        <fullName>Tryptophan 5-hydroxylase 1</fullName>
        <ecNumber evidence="2">1.14.16.4</ecNumber>
    </recommendedName>
    <alternativeName>
        <fullName>Tryptophan 5-monooxygenase 1</fullName>
    </alternativeName>
</protein>
<gene>
    <name type="primary">TPH1</name>
    <name type="synonym">TPH</name>
    <name type="synonym">TPRH</name>
    <name type="synonym">TRPH</name>
</gene>
<feature type="chain" id="PRO_0000205568" description="Tryptophan 5-hydroxylase 1">
    <location>
        <begin position="1"/>
        <end position="444"/>
    </location>
</feature>
<feature type="domain" description="ACT" evidence="5">
    <location>
        <begin position="19"/>
        <end position="94"/>
    </location>
</feature>
<feature type="binding site" evidence="3">
    <location>
        <position position="235"/>
    </location>
    <ligand>
        <name>L-tryptophan</name>
        <dbReference type="ChEBI" id="CHEBI:57912"/>
    </ligand>
</feature>
<feature type="binding site" evidence="3">
    <location>
        <position position="257"/>
    </location>
    <ligand>
        <name>L-tryptophan</name>
        <dbReference type="ChEBI" id="CHEBI:57912"/>
    </ligand>
</feature>
<feature type="binding site" evidence="3">
    <location>
        <position position="265"/>
    </location>
    <ligand>
        <name>L-tryptophan</name>
        <dbReference type="ChEBI" id="CHEBI:57912"/>
    </ligand>
</feature>
<feature type="binding site" evidence="6 9">
    <location>
        <position position="272"/>
    </location>
    <ligand>
        <name>Fe cation</name>
        <dbReference type="ChEBI" id="CHEBI:24875"/>
    </ligand>
</feature>
<feature type="binding site" evidence="6 9">
    <location>
        <position position="277"/>
    </location>
    <ligand>
        <name>Fe cation</name>
        <dbReference type="ChEBI" id="CHEBI:24875"/>
    </ligand>
</feature>
<feature type="binding site" evidence="6 9">
    <location>
        <position position="317"/>
    </location>
    <ligand>
        <name>Fe cation</name>
        <dbReference type="ChEBI" id="CHEBI:24875"/>
    </ligand>
</feature>
<feature type="binding site" evidence="3">
    <location>
        <position position="336"/>
    </location>
    <ligand>
        <name>L-tryptophan</name>
        <dbReference type="ChEBI" id="CHEBI:57912"/>
    </ligand>
</feature>
<feature type="binding site" evidence="3">
    <location>
        <position position="366"/>
    </location>
    <ligand>
        <name>L-tryptophan</name>
        <dbReference type="ChEBI" id="CHEBI:57912"/>
    </ligand>
</feature>
<feature type="modified residue" description="Phosphoserine; by PKA" evidence="4">
    <location>
        <position position="58"/>
    </location>
</feature>
<feature type="splice variant" id="VSP_000546" description="In isoform 2." evidence="8">
    <original>VSRKPSI</original>
    <variation>SLNEDVLQVSVFALLLFLPSLHGECHPDT</variation>
    <location>
        <begin position="438"/>
        <end position="444"/>
    </location>
</feature>
<feature type="sequence conflict" description="In Ref. 2; AAA67050." evidence="8" ref="2">
    <original>S</original>
    <variation>T</variation>
    <location>
        <position position="19"/>
    </location>
</feature>
<feature type="sequence conflict" description="In Ref. 2; AAA67050." evidence="8" ref="2">
    <original>I</original>
    <variation>T</variation>
    <location>
        <position position="68"/>
    </location>
</feature>
<feature type="sequence conflict" description="In Ref. 2; AAA67050." evidence="8" ref="2">
    <original>NL</original>
    <variation>TP</variation>
    <location>
        <begin position="90"/>
        <end position="91"/>
    </location>
</feature>
<feature type="sequence conflict" description="In Ref. 2; AAA67050." evidence="8" ref="2">
    <original>L</original>
    <variation>M</variation>
    <location>
        <position position="97"/>
    </location>
</feature>
<feature type="sequence conflict" description="In Ref. 2; AAA67050." evidence="8" ref="2">
    <original>D</original>
    <variation>E</variation>
    <location>
        <position position="100"/>
    </location>
</feature>
<feature type="sequence conflict" description="In Ref. 2; AAA67050." evidence="8" ref="2">
    <original>T</original>
    <variation>S</variation>
    <location>
        <position position="104"/>
    </location>
</feature>
<feature type="sequence conflict" description="In Ref. 2; AAA67050." evidence="8" ref="2">
    <original>L</original>
    <variation>S</variation>
    <location>
        <position position="151"/>
    </location>
</feature>
<feature type="sequence conflict" description="In Ref. 2; AAA67050." evidence="8" ref="2">
    <original>N</original>
    <variation>S</variation>
    <location>
        <position position="154"/>
    </location>
</feature>
<feature type="sequence conflict" description="In Ref. 2; AAA67050." evidence="8" ref="2">
    <original>H</original>
    <variation>Y</variation>
    <location>
        <position position="157"/>
    </location>
</feature>
<feature type="sequence conflict" description="In Ref. 2; AAA67050." evidence="8" ref="2">
    <original>Q</original>
    <variation>R</variation>
    <location>
        <position position="179"/>
    </location>
</feature>
<feature type="sequence conflict" description="In Ref. 2; AAA67050." evidence="8" ref="2">
    <original>R</original>
    <variation>Q</variation>
    <location>
        <position position="207"/>
    </location>
</feature>
<feature type="sequence conflict" description="In Ref. 2; AAA67050." evidence="8" ref="2">
    <original>V</original>
    <variation>I</variation>
    <location>
        <position position="217"/>
    </location>
</feature>
<feature type="sequence conflict" description="In Ref. 2; AAA67050." evidence="8" ref="2">
    <original>A</original>
    <variation>V</variation>
    <location>
        <position position="344"/>
    </location>
</feature>
<feature type="sequence conflict" description="In Ref. 2; AAA67050." evidence="8" ref="2">
    <original>T</original>
    <variation>A</variation>
    <location>
        <position position="414"/>
    </location>
</feature>
<feature type="sequence conflict" description="In Ref. 2; AAA67050." evidence="8" ref="2">
    <original>S</original>
    <variation>N</variation>
    <location>
        <position position="419"/>
    </location>
</feature>
<feature type="sequence conflict" description="In Ref. 2; AAA67050." evidence="8" ref="2">
    <original>Q</original>
    <variation>R</variation>
    <location>
        <position position="425"/>
    </location>
</feature>
<feature type="sequence conflict" description="In Ref. 2; AAA67050." evidence="8" ref="2">
    <original>A</original>
    <variation>G</variation>
    <location>
        <position position="436"/>
    </location>
</feature>
<feature type="helix" evidence="13">
    <location>
        <begin position="112"/>
        <end position="117"/>
    </location>
</feature>
<feature type="turn" evidence="13">
    <location>
        <begin position="118"/>
        <end position="120"/>
    </location>
</feature>
<feature type="turn" evidence="12">
    <location>
        <begin position="126"/>
        <end position="128"/>
    </location>
</feature>
<feature type="strand" evidence="14">
    <location>
        <begin position="131"/>
        <end position="133"/>
    </location>
</feature>
<feature type="turn" evidence="13">
    <location>
        <begin position="134"/>
        <end position="137"/>
    </location>
</feature>
<feature type="helix" evidence="13">
    <location>
        <begin position="139"/>
        <end position="154"/>
    </location>
</feature>
<feature type="helix" evidence="13">
    <location>
        <begin position="168"/>
        <end position="188"/>
    </location>
</feature>
<feature type="helix" evidence="13">
    <location>
        <begin position="191"/>
        <end position="203"/>
    </location>
</feature>
<feature type="helix" evidence="13">
    <location>
        <begin position="214"/>
        <end position="225"/>
    </location>
</feature>
<feature type="strand" evidence="13">
    <location>
        <begin position="228"/>
        <end position="231"/>
    </location>
</feature>
<feature type="strand" evidence="10">
    <location>
        <begin position="233"/>
        <end position="235"/>
    </location>
</feature>
<feature type="helix" evidence="13">
    <location>
        <begin position="238"/>
        <end position="245"/>
    </location>
</feature>
<feature type="turn" evidence="13">
    <location>
        <begin position="246"/>
        <end position="248"/>
    </location>
</feature>
<feature type="strand" evidence="13">
    <location>
        <begin position="249"/>
        <end position="252"/>
    </location>
</feature>
<feature type="helix" evidence="13">
    <location>
        <begin position="270"/>
        <end position="276"/>
    </location>
</feature>
<feature type="helix" evidence="13">
    <location>
        <begin position="278"/>
        <end position="281"/>
    </location>
</feature>
<feature type="helix" evidence="13">
    <location>
        <begin position="284"/>
        <end position="297"/>
    </location>
</feature>
<feature type="helix" evidence="13">
    <location>
        <begin position="302"/>
        <end position="313"/>
    </location>
</feature>
<feature type="turn" evidence="13">
    <location>
        <begin position="314"/>
        <end position="318"/>
    </location>
</feature>
<feature type="strand" evidence="13">
    <location>
        <begin position="320"/>
        <end position="323"/>
    </location>
</feature>
<feature type="strand" evidence="13">
    <location>
        <begin position="326"/>
        <end position="329"/>
    </location>
</feature>
<feature type="helix" evidence="13">
    <location>
        <begin position="332"/>
        <end position="335"/>
    </location>
</feature>
<feature type="helix" evidence="13">
    <location>
        <begin position="338"/>
        <end position="344"/>
    </location>
</feature>
<feature type="turn" evidence="11">
    <location>
        <begin position="345"/>
        <end position="347"/>
    </location>
</feature>
<feature type="strand" evidence="13">
    <location>
        <begin position="351"/>
        <end position="353"/>
    </location>
</feature>
<feature type="helix" evidence="13">
    <location>
        <begin position="356"/>
        <end position="359"/>
    </location>
</feature>
<feature type="strand" evidence="13">
    <location>
        <begin position="366"/>
        <end position="368"/>
    </location>
</feature>
<feature type="strand" evidence="13">
    <location>
        <begin position="373"/>
        <end position="377"/>
    </location>
</feature>
<feature type="helix" evidence="13">
    <location>
        <begin position="379"/>
        <end position="393"/>
    </location>
</feature>
<evidence type="ECO:0000250" key="1">
    <source>
        <dbReference type="UniProtKB" id="P09810"/>
    </source>
</evidence>
<evidence type="ECO:0000250" key="2">
    <source>
        <dbReference type="UniProtKB" id="P17532"/>
    </source>
</evidence>
<evidence type="ECO:0000250" key="3">
    <source>
        <dbReference type="UniProtKB" id="P70080"/>
    </source>
</evidence>
<evidence type="ECO:0000255" key="4"/>
<evidence type="ECO:0000255" key="5">
    <source>
        <dbReference type="PROSITE-ProRule" id="PRU01007"/>
    </source>
</evidence>
<evidence type="ECO:0000269" key="6">
    <source>
    </source>
</evidence>
<evidence type="ECO:0000269" key="7">
    <source>
    </source>
</evidence>
<evidence type="ECO:0000305" key="8"/>
<evidence type="ECO:0007744" key="9">
    <source>
        <dbReference type="PDB" id="1MLW"/>
    </source>
</evidence>
<evidence type="ECO:0007829" key="10">
    <source>
        <dbReference type="PDB" id="1MLW"/>
    </source>
</evidence>
<evidence type="ECO:0007829" key="11">
    <source>
        <dbReference type="PDB" id="3HF6"/>
    </source>
</evidence>
<evidence type="ECO:0007829" key="12">
    <source>
        <dbReference type="PDB" id="5J6D"/>
    </source>
</evidence>
<evidence type="ECO:0007829" key="13">
    <source>
        <dbReference type="PDB" id="7ZIH"/>
    </source>
</evidence>
<evidence type="ECO:0007829" key="14">
    <source>
        <dbReference type="PDB" id="7ZIJ"/>
    </source>
</evidence>
<comment type="function">
    <text evidence="2">Oxidizes L-tryptophan to 5-hydroxy-l-tryptophan in the rate-determining step of serotonin biosynthesis.</text>
</comment>
<comment type="catalytic activity">
    <reaction evidence="2">
        <text>(6R)-L-erythro-5,6,7,8-tetrahydrobiopterin + L-tryptophan + O2 = 5-hydroxy-L-tryptophan + (4aS,6R)-4a-hydroxy-L-erythro-5,6,7,8-tetrahydrobiopterin</text>
        <dbReference type="Rhea" id="RHEA:16709"/>
        <dbReference type="ChEBI" id="CHEBI:15379"/>
        <dbReference type="ChEBI" id="CHEBI:15642"/>
        <dbReference type="ChEBI" id="CHEBI:57912"/>
        <dbReference type="ChEBI" id="CHEBI:58266"/>
        <dbReference type="ChEBI" id="CHEBI:59560"/>
        <dbReference type="EC" id="1.14.16.4"/>
    </reaction>
</comment>
<comment type="cofactor">
    <cofactor evidence="6">
        <name>Fe(2+)</name>
        <dbReference type="ChEBI" id="CHEBI:29033"/>
    </cofactor>
</comment>
<comment type="pathway">
    <text evidence="2">Aromatic compound metabolism; serotonin biosynthesis; serotonin from L-tryptophan: step 1/2.</text>
</comment>
<comment type="subunit">
    <text evidence="2 3">Homotetramer (By similarity). Interacts with DNAJC12 (By similarity).</text>
</comment>
<comment type="interaction">
    <interactant intactId="EBI-3956833">
        <id>P17752</id>
    </interactant>
    <interactant intactId="EBI-949378">
        <id>Q14457</id>
        <label>BECN1</label>
    </interactant>
    <organismsDiffer>false</organismsDiffer>
    <experiments>3</experiments>
</comment>
<comment type="interaction">
    <interactant intactId="EBI-3956833">
        <id>P17752</id>
    </interactant>
    <interactant intactId="EBI-18924329">
        <id>Q96IK1-2</id>
        <label>BOD1</label>
    </interactant>
    <organismsDiffer>false</organismsDiffer>
    <experiments>3</experiments>
</comment>
<comment type="interaction">
    <interactant intactId="EBI-3956833">
        <id>P17752</id>
    </interactant>
    <interactant intactId="EBI-2689937">
        <id>Q9UKB3</id>
        <label>DNAJC12</label>
    </interactant>
    <organismsDiffer>false</organismsDiffer>
    <experiments>3</experiments>
</comment>
<comment type="interaction">
    <interactant intactId="EBI-3956833">
        <id>P17752</id>
    </interactant>
    <interactant intactId="EBI-739467">
        <id>Q9H8Y8</id>
        <label>GORASP2</label>
    </interactant>
    <organismsDiffer>false</organismsDiffer>
    <experiments>5</experiments>
</comment>
<comment type="interaction">
    <interactant intactId="EBI-3956833">
        <id>P17752</id>
    </interactant>
    <interactant intactId="EBI-1050964">
        <id>O43586</id>
        <label>PSTPIP1</label>
    </interactant>
    <organismsDiffer>false</organismsDiffer>
    <experiments>3</experiments>
</comment>
<comment type="interaction">
    <interactant intactId="EBI-3956833">
        <id>P17752</id>
    </interactant>
    <interactant intactId="EBI-12949277">
        <id>O95789-4</id>
        <label>ZMYM6</label>
    </interactant>
    <organismsDiffer>false</organismsDiffer>
    <experiments>3</experiments>
</comment>
<comment type="alternative products">
    <event type="alternative splicing"/>
    <isoform>
        <id>P17752-1</id>
        <name>1</name>
        <sequence type="displayed"/>
    </isoform>
    <isoform>
        <id>P17752-2</id>
        <name>2</name>
        <sequence type="described" ref="VSP_000546"/>
    </isoform>
</comment>
<comment type="tissue specificity">
    <molecule>Isoform 2</molecule>
    <text evidence="7">Seems to be less widely expressed than isoform 1.</text>
</comment>
<comment type="PTM">
    <text evidence="1">Ubiquitinated, leading to its degradation by the proteasome. Ubiquitinated is triggered by phosphorylation.</text>
</comment>
<comment type="PTM">
    <text evidence="1">Phosphorylated; triggering degradation by the proteasome.</text>
</comment>
<comment type="similarity">
    <text evidence="8">Belongs to the biopterin-dependent aromatic amino acid hydroxylase family.</text>
</comment>
<name>TPH1_HUMAN</name>